<proteinExistence type="inferred from homology"/>
<dbReference type="EMBL" id="AF008220">
    <property type="protein sequence ID" value="AAC00398.1"/>
    <property type="status" value="ALT_FRAME"/>
    <property type="molecule type" value="Genomic_DNA"/>
</dbReference>
<dbReference type="EMBL" id="AL009126">
    <property type="protein sequence ID" value="CAB14942.2"/>
    <property type="molecule type" value="Genomic_DNA"/>
</dbReference>
<dbReference type="PIR" id="D70001">
    <property type="entry name" value="D70001"/>
</dbReference>
<dbReference type="RefSeq" id="WP_003229311.1">
    <property type="nucleotide sequence ID" value="NZ_OZ025638.1"/>
</dbReference>
<dbReference type="SMR" id="O34553"/>
<dbReference type="FunCoup" id="O34553">
    <property type="interactions" value="138"/>
</dbReference>
<dbReference type="STRING" id="224308.BSU29640"/>
<dbReference type="PaxDb" id="224308-BSU29640"/>
<dbReference type="EnsemblBacteria" id="CAB14942">
    <property type="protein sequence ID" value="CAB14942"/>
    <property type="gene ID" value="BSU_29640"/>
</dbReference>
<dbReference type="GeneID" id="936758"/>
<dbReference type="KEGG" id="bsu:BSU29640"/>
<dbReference type="PATRIC" id="fig|224308.179.peg.3220"/>
<dbReference type="eggNOG" id="COG1956">
    <property type="taxonomic scope" value="Bacteria"/>
</dbReference>
<dbReference type="InParanoid" id="O34553"/>
<dbReference type="OrthoDB" id="9796252at2"/>
<dbReference type="PhylomeDB" id="O34553"/>
<dbReference type="BioCyc" id="BSUB:BSU29640-MONOMER"/>
<dbReference type="Proteomes" id="UP000001570">
    <property type="component" value="Chromosome"/>
</dbReference>
<dbReference type="GO" id="GO:0005829">
    <property type="term" value="C:cytosol"/>
    <property type="evidence" value="ECO:0000318"/>
    <property type="project" value="GO_Central"/>
</dbReference>
<dbReference type="GO" id="GO:0033745">
    <property type="term" value="F:L-methionine-(R)-S-oxide reductase activity"/>
    <property type="evidence" value="ECO:0000318"/>
    <property type="project" value="GO_Central"/>
</dbReference>
<dbReference type="FunFam" id="3.30.450.40:FF:000008">
    <property type="entry name" value="GAF domain-containing proteins"/>
    <property type="match status" value="1"/>
</dbReference>
<dbReference type="Gene3D" id="3.30.450.40">
    <property type="match status" value="1"/>
</dbReference>
<dbReference type="InterPro" id="IPR000614">
    <property type="entry name" value="FRMsr_CS"/>
</dbReference>
<dbReference type="InterPro" id="IPR003018">
    <property type="entry name" value="GAF"/>
</dbReference>
<dbReference type="InterPro" id="IPR029016">
    <property type="entry name" value="GAF-like_dom_sf"/>
</dbReference>
<dbReference type="InterPro" id="IPR051330">
    <property type="entry name" value="Phosphatase_reg/MetRdx"/>
</dbReference>
<dbReference type="PANTHER" id="PTHR21021:SF15">
    <property type="entry name" value="FREE METHIONINE-R-SULFOXIDE REDUCTASE"/>
    <property type="match status" value="1"/>
</dbReference>
<dbReference type="PANTHER" id="PTHR21021">
    <property type="entry name" value="GAF/PUTATIVE CYTOSKELETAL PROTEIN"/>
    <property type="match status" value="1"/>
</dbReference>
<dbReference type="Pfam" id="PF13185">
    <property type="entry name" value="GAF_2"/>
    <property type="match status" value="1"/>
</dbReference>
<dbReference type="SMART" id="SM00065">
    <property type="entry name" value="GAF"/>
    <property type="match status" value="1"/>
</dbReference>
<dbReference type="SUPFAM" id="SSF55781">
    <property type="entry name" value="GAF domain-like"/>
    <property type="match status" value="1"/>
</dbReference>
<dbReference type="PROSITE" id="PS01320">
    <property type="entry name" value="UPF0067"/>
    <property type="match status" value="1"/>
</dbReference>
<organism>
    <name type="scientific">Bacillus subtilis (strain 168)</name>
    <dbReference type="NCBI Taxonomy" id="224308"/>
    <lineage>
        <taxon>Bacteria</taxon>
        <taxon>Bacillati</taxon>
        <taxon>Bacillota</taxon>
        <taxon>Bacilli</taxon>
        <taxon>Bacillales</taxon>
        <taxon>Bacillaceae</taxon>
        <taxon>Bacillus</taxon>
    </lineage>
</organism>
<feature type="chain" id="PRO_0000171554" description="Protein YtsP">
    <location>
        <begin position="1"/>
        <end position="163"/>
    </location>
</feature>
<name>YTSP_BACSU</name>
<sequence>MFHVEKQSGDKEKDYQLLLKQLEAMTEDETDQIANYANASALLYHSLPEVNWAGFYFAKEEDGQLVLGPFQGLPACVRIPFGRGVCGTAYANGKVERIEDVNAFPGHIACDAASQSEIVLPIRVDGKIVGVLDIDSPVKNRFDEIDEKYLTQFAETLEKALAQ</sequence>
<comment type="similarity">
    <text evidence="1">Belongs to the free Met sulfoxide reductase family.</text>
</comment>
<comment type="sequence caution" evidence="1">
    <conflict type="frameshift">
        <sequence resource="EMBL-CDS" id="AAC00398"/>
    </conflict>
</comment>
<keyword id="KW-1185">Reference proteome</keyword>
<reference key="1">
    <citation type="journal article" date="1997" name="Microbiology">
        <title>Sequencing and functional annotation of the Bacillus subtilis genes in the 200 kb rrnB-dnaB region.</title>
        <authorList>
            <person name="Lapidus A."/>
            <person name="Galleron N."/>
            <person name="Sorokin A."/>
            <person name="Ehrlich S.D."/>
        </authorList>
    </citation>
    <scope>NUCLEOTIDE SEQUENCE [GENOMIC DNA]</scope>
    <source>
        <strain>168</strain>
    </source>
</reference>
<reference key="2">
    <citation type="journal article" date="1997" name="Nature">
        <title>The complete genome sequence of the Gram-positive bacterium Bacillus subtilis.</title>
        <authorList>
            <person name="Kunst F."/>
            <person name="Ogasawara N."/>
            <person name="Moszer I."/>
            <person name="Albertini A.M."/>
            <person name="Alloni G."/>
            <person name="Azevedo V."/>
            <person name="Bertero M.G."/>
            <person name="Bessieres P."/>
            <person name="Bolotin A."/>
            <person name="Borchert S."/>
            <person name="Borriss R."/>
            <person name="Boursier L."/>
            <person name="Brans A."/>
            <person name="Braun M."/>
            <person name="Brignell S.C."/>
            <person name="Bron S."/>
            <person name="Brouillet S."/>
            <person name="Bruschi C.V."/>
            <person name="Caldwell B."/>
            <person name="Capuano V."/>
            <person name="Carter N.M."/>
            <person name="Choi S.-K."/>
            <person name="Codani J.-J."/>
            <person name="Connerton I.F."/>
            <person name="Cummings N.J."/>
            <person name="Daniel R.A."/>
            <person name="Denizot F."/>
            <person name="Devine K.M."/>
            <person name="Duesterhoeft A."/>
            <person name="Ehrlich S.D."/>
            <person name="Emmerson P.T."/>
            <person name="Entian K.-D."/>
            <person name="Errington J."/>
            <person name="Fabret C."/>
            <person name="Ferrari E."/>
            <person name="Foulger D."/>
            <person name="Fritz C."/>
            <person name="Fujita M."/>
            <person name="Fujita Y."/>
            <person name="Fuma S."/>
            <person name="Galizzi A."/>
            <person name="Galleron N."/>
            <person name="Ghim S.-Y."/>
            <person name="Glaser P."/>
            <person name="Goffeau A."/>
            <person name="Golightly E.J."/>
            <person name="Grandi G."/>
            <person name="Guiseppi G."/>
            <person name="Guy B.J."/>
            <person name="Haga K."/>
            <person name="Haiech J."/>
            <person name="Harwood C.R."/>
            <person name="Henaut A."/>
            <person name="Hilbert H."/>
            <person name="Holsappel S."/>
            <person name="Hosono S."/>
            <person name="Hullo M.-F."/>
            <person name="Itaya M."/>
            <person name="Jones L.-M."/>
            <person name="Joris B."/>
            <person name="Karamata D."/>
            <person name="Kasahara Y."/>
            <person name="Klaerr-Blanchard M."/>
            <person name="Klein C."/>
            <person name="Kobayashi Y."/>
            <person name="Koetter P."/>
            <person name="Koningstein G."/>
            <person name="Krogh S."/>
            <person name="Kumano M."/>
            <person name="Kurita K."/>
            <person name="Lapidus A."/>
            <person name="Lardinois S."/>
            <person name="Lauber J."/>
            <person name="Lazarevic V."/>
            <person name="Lee S.-M."/>
            <person name="Levine A."/>
            <person name="Liu H."/>
            <person name="Masuda S."/>
            <person name="Mauel C."/>
            <person name="Medigue C."/>
            <person name="Medina N."/>
            <person name="Mellado R.P."/>
            <person name="Mizuno M."/>
            <person name="Moestl D."/>
            <person name="Nakai S."/>
            <person name="Noback M."/>
            <person name="Noone D."/>
            <person name="O'Reilly M."/>
            <person name="Ogawa K."/>
            <person name="Ogiwara A."/>
            <person name="Oudega B."/>
            <person name="Park S.-H."/>
            <person name="Parro V."/>
            <person name="Pohl T.M."/>
            <person name="Portetelle D."/>
            <person name="Porwollik S."/>
            <person name="Prescott A.M."/>
            <person name="Presecan E."/>
            <person name="Pujic P."/>
            <person name="Purnelle B."/>
            <person name="Rapoport G."/>
            <person name="Rey M."/>
            <person name="Reynolds S."/>
            <person name="Rieger M."/>
            <person name="Rivolta C."/>
            <person name="Rocha E."/>
            <person name="Roche B."/>
            <person name="Rose M."/>
            <person name="Sadaie Y."/>
            <person name="Sato T."/>
            <person name="Scanlan E."/>
            <person name="Schleich S."/>
            <person name="Schroeter R."/>
            <person name="Scoffone F."/>
            <person name="Sekiguchi J."/>
            <person name="Sekowska A."/>
            <person name="Seror S.J."/>
            <person name="Serror P."/>
            <person name="Shin B.-S."/>
            <person name="Soldo B."/>
            <person name="Sorokin A."/>
            <person name="Tacconi E."/>
            <person name="Takagi T."/>
            <person name="Takahashi H."/>
            <person name="Takemaru K."/>
            <person name="Takeuchi M."/>
            <person name="Tamakoshi A."/>
            <person name="Tanaka T."/>
            <person name="Terpstra P."/>
            <person name="Tognoni A."/>
            <person name="Tosato V."/>
            <person name="Uchiyama S."/>
            <person name="Vandenbol M."/>
            <person name="Vannier F."/>
            <person name="Vassarotti A."/>
            <person name="Viari A."/>
            <person name="Wambutt R."/>
            <person name="Wedler E."/>
            <person name="Wedler H."/>
            <person name="Weitzenegger T."/>
            <person name="Winters P."/>
            <person name="Wipat A."/>
            <person name="Yamamoto H."/>
            <person name="Yamane K."/>
            <person name="Yasumoto K."/>
            <person name="Yata K."/>
            <person name="Yoshida K."/>
            <person name="Yoshikawa H.-F."/>
            <person name="Zumstein E."/>
            <person name="Yoshikawa H."/>
            <person name="Danchin A."/>
        </authorList>
    </citation>
    <scope>NUCLEOTIDE SEQUENCE [LARGE SCALE GENOMIC DNA]</scope>
    <source>
        <strain>168</strain>
    </source>
</reference>
<evidence type="ECO:0000305" key="1"/>
<gene>
    <name type="primary">ytsP</name>
    <name type="ordered locus">BSU29640</name>
</gene>
<accession>O34553</accession>
<protein>
    <recommendedName>
        <fullName>Protein YtsP</fullName>
    </recommendedName>
</protein>